<feature type="initiator methionine" description="Removed" evidence="1">
    <location>
        <position position="1"/>
    </location>
</feature>
<feature type="chain" id="PRO_0000135367" description="Glutamine--fructose-6-phosphate aminotransferase [isomerizing]">
    <location>
        <begin position="2"/>
        <end position="611"/>
    </location>
</feature>
<feature type="domain" description="Glutamine amidotransferase type-2" evidence="1">
    <location>
        <begin position="2"/>
        <end position="219"/>
    </location>
</feature>
<feature type="domain" description="SIS 1" evidence="1">
    <location>
        <begin position="287"/>
        <end position="427"/>
    </location>
</feature>
<feature type="domain" description="SIS 2" evidence="1">
    <location>
        <begin position="460"/>
        <end position="601"/>
    </location>
</feature>
<feature type="active site" description="Nucleophile; for GATase activity" evidence="1">
    <location>
        <position position="2"/>
    </location>
</feature>
<feature type="active site" description="For Fru-6P isomerization activity" evidence="1">
    <location>
        <position position="606"/>
    </location>
</feature>
<protein>
    <recommendedName>
        <fullName evidence="1">Glutamine--fructose-6-phosphate aminotransferase [isomerizing]</fullName>
        <ecNumber evidence="1">2.6.1.16</ecNumber>
    </recommendedName>
    <alternativeName>
        <fullName evidence="1">D-fructose-6-phosphate amidotransferase</fullName>
    </alternativeName>
    <alternativeName>
        <fullName evidence="1">GFAT</fullName>
    </alternativeName>
    <alternativeName>
        <fullName evidence="1">Glucosamine-6-phosphate synthase</fullName>
    </alternativeName>
    <alternativeName>
        <fullName evidence="1">Hexosephosphate aminotransferase</fullName>
    </alternativeName>
    <alternativeName>
        <fullName evidence="1">L-glutamine--D-fructose-6-phosphate amidotransferase</fullName>
    </alternativeName>
</protein>
<reference key="1">
    <citation type="journal article" date="2000" name="Nature">
        <title>Complete genome sequence of Pseudomonas aeruginosa PAO1, an opportunistic pathogen.</title>
        <authorList>
            <person name="Stover C.K."/>
            <person name="Pham X.-Q.T."/>
            <person name="Erwin A.L."/>
            <person name="Mizoguchi S.D."/>
            <person name="Warrener P."/>
            <person name="Hickey M.J."/>
            <person name="Brinkman F.S.L."/>
            <person name="Hufnagle W.O."/>
            <person name="Kowalik D.J."/>
            <person name="Lagrou M."/>
            <person name="Garber R.L."/>
            <person name="Goltry L."/>
            <person name="Tolentino E."/>
            <person name="Westbrock-Wadman S."/>
            <person name="Yuan Y."/>
            <person name="Brody L.L."/>
            <person name="Coulter S.N."/>
            <person name="Folger K.R."/>
            <person name="Kas A."/>
            <person name="Larbig K."/>
            <person name="Lim R.M."/>
            <person name="Smith K.A."/>
            <person name="Spencer D.H."/>
            <person name="Wong G.K.-S."/>
            <person name="Wu Z."/>
            <person name="Paulsen I.T."/>
            <person name="Reizer J."/>
            <person name="Saier M.H. Jr."/>
            <person name="Hancock R.E.W."/>
            <person name="Lory S."/>
            <person name="Olson M.V."/>
        </authorList>
    </citation>
    <scope>NUCLEOTIDE SEQUENCE [LARGE SCALE GENOMIC DNA]</scope>
    <source>
        <strain>ATCC 15692 / DSM 22644 / CIP 104116 / JCM 14847 / LMG 12228 / 1C / PRS 101 / PAO1</strain>
    </source>
</reference>
<accession>Q9HT25</accession>
<evidence type="ECO:0000255" key="1">
    <source>
        <dbReference type="HAMAP-Rule" id="MF_00164"/>
    </source>
</evidence>
<organism>
    <name type="scientific">Pseudomonas aeruginosa (strain ATCC 15692 / DSM 22644 / CIP 104116 / JCM 14847 / LMG 12228 / 1C / PRS 101 / PAO1)</name>
    <dbReference type="NCBI Taxonomy" id="208964"/>
    <lineage>
        <taxon>Bacteria</taxon>
        <taxon>Pseudomonadati</taxon>
        <taxon>Pseudomonadota</taxon>
        <taxon>Gammaproteobacteria</taxon>
        <taxon>Pseudomonadales</taxon>
        <taxon>Pseudomonadaceae</taxon>
        <taxon>Pseudomonas</taxon>
    </lineage>
</organism>
<gene>
    <name evidence="1" type="primary">glmS</name>
    <name type="ordered locus">PA5549</name>
</gene>
<comment type="function">
    <text evidence="1">Catalyzes the first step in hexosamine metabolism, converting fructose-6P into glucosamine-6P using glutamine as a nitrogen source.</text>
</comment>
<comment type="catalytic activity">
    <reaction evidence="1">
        <text>D-fructose 6-phosphate + L-glutamine = D-glucosamine 6-phosphate + L-glutamate</text>
        <dbReference type="Rhea" id="RHEA:13237"/>
        <dbReference type="ChEBI" id="CHEBI:29985"/>
        <dbReference type="ChEBI" id="CHEBI:58359"/>
        <dbReference type="ChEBI" id="CHEBI:58725"/>
        <dbReference type="ChEBI" id="CHEBI:61527"/>
        <dbReference type="EC" id="2.6.1.16"/>
    </reaction>
</comment>
<comment type="subunit">
    <text evidence="1">Homodimer.</text>
</comment>
<comment type="subcellular location">
    <subcellularLocation>
        <location evidence="1">Cytoplasm</location>
    </subcellularLocation>
</comment>
<keyword id="KW-0032">Aminotransferase</keyword>
<keyword id="KW-0963">Cytoplasm</keyword>
<keyword id="KW-0315">Glutamine amidotransferase</keyword>
<keyword id="KW-1185">Reference proteome</keyword>
<keyword id="KW-0677">Repeat</keyword>
<keyword id="KW-0808">Transferase</keyword>
<sequence length="611" mass="66295">MCGIVGAIAERNITPILIEGLKRLEYRGYDSAGVAVFDNEGRLQRCRRVGKVASLEEGLAGTPLLGRLGIAHTRWATHGAPTEGNAHPHFSSDEVAVVHNGIIENHEPLRERLKGLGYVFTSQTDTEVIVHLLHHKLQSIGDLTLALKDAVKELHGAYGLAVISAAQPDRIVAARSGSPLVIGLGLGENFLASDQLALRQVTDRFIYLEEGDIAEIRRDSVRLWDVQGNDVQRETVQYHEGAEAADKGEYRHFMLKEIHEQPSVVQRTLEGRLGQNQVLVESFGPQAAELFAKVRNVQIVACGTSYHAGMVARYWLESLTGIPCQVEVASEFRYRKVAVQPDCLFVTISQSGETADTLAALRNAKELGFLSSVAICNVATSSLVRESDLTLLTQAGPEIGVASTKAFTTQLVALLLLTLGIGQVQKRLADGVEAELVDELRRLPTRLGEALAMNRTVEKVSELFAEKHHTLFLGRGAQFPVALEGALKLKEISYIHAEAYPAGELKHGPLALVDSDMPVVTVAPNNELVEKLKSNLQEVRARGGELVVFADEGAGIEAGEGTHVVGMPHIGDVLSPILYTIPLQLLSYHVAVLKGTDVDQPRNLAKSVTVE</sequence>
<proteinExistence type="inferred from homology"/>
<dbReference type="EC" id="2.6.1.16" evidence="1"/>
<dbReference type="EMBL" id="AE004091">
    <property type="protein sequence ID" value="AAG08934.1"/>
    <property type="molecule type" value="Genomic_DNA"/>
</dbReference>
<dbReference type="PIR" id="F82951">
    <property type="entry name" value="F82951"/>
</dbReference>
<dbReference type="RefSeq" id="NP_254236.1">
    <property type="nucleotide sequence ID" value="NC_002516.2"/>
</dbReference>
<dbReference type="RefSeq" id="WP_003114654.1">
    <property type="nucleotide sequence ID" value="NZ_QZGE01000012.1"/>
</dbReference>
<dbReference type="SMR" id="Q9HT25"/>
<dbReference type="FunCoup" id="Q9HT25">
    <property type="interactions" value="574"/>
</dbReference>
<dbReference type="STRING" id="208964.PA5549"/>
<dbReference type="PaxDb" id="208964-PA5549"/>
<dbReference type="GeneID" id="877797"/>
<dbReference type="KEGG" id="pae:PA5549"/>
<dbReference type="PATRIC" id="fig|208964.12.peg.5815"/>
<dbReference type="PseudoCAP" id="PA5549"/>
<dbReference type="HOGENOM" id="CLU_012520_5_2_6"/>
<dbReference type="InParanoid" id="Q9HT25"/>
<dbReference type="OrthoDB" id="9761808at2"/>
<dbReference type="PhylomeDB" id="Q9HT25"/>
<dbReference type="BioCyc" id="PAER208964:G1FZ6-5676-MONOMER"/>
<dbReference type="BRENDA" id="2.6.1.16">
    <property type="organism ID" value="5087"/>
</dbReference>
<dbReference type="Proteomes" id="UP000002438">
    <property type="component" value="Chromosome"/>
</dbReference>
<dbReference type="GO" id="GO:0005829">
    <property type="term" value="C:cytosol"/>
    <property type="evidence" value="ECO:0000318"/>
    <property type="project" value="GO_Central"/>
</dbReference>
<dbReference type="GO" id="GO:0097367">
    <property type="term" value="F:carbohydrate derivative binding"/>
    <property type="evidence" value="ECO:0007669"/>
    <property type="project" value="InterPro"/>
</dbReference>
<dbReference type="GO" id="GO:0004360">
    <property type="term" value="F:glutamine-fructose-6-phosphate transaminase (isomerizing) activity"/>
    <property type="evidence" value="ECO:0000318"/>
    <property type="project" value="GO_Central"/>
</dbReference>
<dbReference type="GO" id="GO:0005975">
    <property type="term" value="P:carbohydrate metabolic process"/>
    <property type="evidence" value="ECO:0007669"/>
    <property type="project" value="UniProtKB-UniRule"/>
</dbReference>
<dbReference type="GO" id="GO:0006002">
    <property type="term" value="P:fructose 6-phosphate metabolic process"/>
    <property type="evidence" value="ECO:0000318"/>
    <property type="project" value="GO_Central"/>
</dbReference>
<dbReference type="GO" id="GO:0006487">
    <property type="term" value="P:protein N-linked glycosylation"/>
    <property type="evidence" value="ECO:0000318"/>
    <property type="project" value="GO_Central"/>
</dbReference>
<dbReference type="GO" id="GO:0006047">
    <property type="term" value="P:UDP-N-acetylglucosamine metabolic process"/>
    <property type="evidence" value="ECO:0000318"/>
    <property type="project" value="GO_Central"/>
</dbReference>
<dbReference type="CDD" id="cd00714">
    <property type="entry name" value="GFAT"/>
    <property type="match status" value="1"/>
</dbReference>
<dbReference type="CDD" id="cd05008">
    <property type="entry name" value="SIS_GlmS_GlmD_1"/>
    <property type="match status" value="1"/>
</dbReference>
<dbReference type="CDD" id="cd05009">
    <property type="entry name" value="SIS_GlmS_GlmD_2"/>
    <property type="match status" value="1"/>
</dbReference>
<dbReference type="FunFam" id="3.40.50.10490:FF:000001">
    <property type="entry name" value="Glutamine--fructose-6-phosphate aminotransferase [isomerizing]"/>
    <property type="match status" value="1"/>
</dbReference>
<dbReference type="FunFam" id="3.40.50.10490:FF:000002">
    <property type="entry name" value="Glutamine--fructose-6-phosphate aminotransferase [isomerizing]"/>
    <property type="match status" value="1"/>
</dbReference>
<dbReference type="FunFam" id="3.60.20.10:FF:000006">
    <property type="entry name" value="Glutamine--fructose-6-phosphate aminotransferase [isomerizing]"/>
    <property type="match status" value="1"/>
</dbReference>
<dbReference type="Gene3D" id="3.40.50.10490">
    <property type="entry name" value="Glucose-6-phosphate isomerase like protein, domain 1"/>
    <property type="match status" value="2"/>
</dbReference>
<dbReference type="Gene3D" id="3.60.20.10">
    <property type="entry name" value="Glutamine Phosphoribosylpyrophosphate, subunit 1, domain 1"/>
    <property type="match status" value="1"/>
</dbReference>
<dbReference type="HAMAP" id="MF_00164">
    <property type="entry name" value="GlmS"/>
    <property type="match status" value="1"/>
</dbReference>
<dbReference type="InterPro" id="IPR017932">
    <property type="entry name" value="GATase_2_dom"/>
</dbReference>
<dbReference type="InterPro" id="IPR005855">
    <property type="entry name" value="GFAT"/>
</dbReference>
<dbReference type="InterPro" id="IPR047084">
    <property type="entry name" value="GFAT_N"/>
</dbReference>
<dbReference type="InterPro" id="IPR035466">
    <property type="entry name" value="GlmS/AgaS_SIS"/>
</dbReference>
<dbReference type="InterPro" id="IPR035490">
    <property type="entry name" value="GlmS/FrlB_SIS"/>
</dbReference>
<dbReference type="InterPro" id="IPR029055">
    <property type="entry name" value="Ntn_hydrolases_N"/>
</dbReference>
<dbReference type="InterPro" id="IPR001347">
    <property type="entry name" value="SIS_dom"/>
</dbReference>
<dbReference type="InterPro" id="IPR046348">
    <property type="entry name" value="SIS_dom_sf"/>
</dbReference>
<dbReference type="NCBIfam" id="TIGR01135">
    <property type="entry name" value="glmS"/>
    <property type="match status" value="1"/>
</dbReference>
<dbReference type="NCBIfam" id="NF001484">
    <property type="entry name" value="PRK00331.1"/>
    <property type="match status" value="1"/>
</dbReference>
<dbReference type="PANTHER" id="PTHR10937">
    <property type="entry name" value="GLUCOSAMINE--FRUCTOSE-6-PHOSPHATE AMINOTRANSFERASE, ISOMERIZING"/>
    <property type="match status" value="1"/>
</dbReference>
<dbReference type="PANTHER" id="PTHR10937:SF0">
    <property type="entry name" value="GLUTAMINE--FRUCTOSE-6-PHOSPHATE TRANSAMINASE (ISOMERIZING)"/>
    <property type="match status" value="1"/>
</dbReference>
<dbReference type="Pfam" id="PF13522">
    <property type="entry name" value="GATase_6"/>
    <property type="match status" value="1"/>
</dbReference>
<dbReference type="Pfam" id="PF01380">
    <property type="entry name" value="SIS"/>
    <property type="match status" value="2"/>
</dbReference>
<dbReference type="SUPFAM" id="SSF56235">
    <property type="entry name" value="N-terminal nucleophile aminohydrolases (Ntn hydrolases)"/>
    <property type="match status" value="1"/>
</dbReference>
<dbReference type="SUPFAM" id="SSF53697">
    <property type="entry name" value="SIS domain"/>
    <property type="match status" value="1"/>
</dbReference>
<dbReference type="PROSITE" id="PS51278">
    <property type="entry name" value="GATASE_TYPE_2"/>
    <property type="match status" value="1"/>
</dbReference>
<dbReference type="PROSITE" id="PS51464">
    <property type="entry name" value="SIS"/>
    <property type="match status" value="2"/>
</dbReference>
<name>GLMS_PSEAE</name>